<evidence type="ECO:0000255" key="1">
    <source>
        <dbReference type="HAMAP-Rule" id="MF_01182"/>
    </source>
</evidence>
<protein>
    <recommendedName>
        <fullName evidence="1">Cytochrome c-552</fullName>
        <ecNumber evidence="1">1.7.2.2</ecNumber>
    </recommendedName>
    <alternativeName>
        <fullName evidence="1">Ammonia-forming cytochrome c nitrite reductase</fullName>
        <shortName evidence="1">Cytochrome c nitrite reductase</shortName>
    </alternativeName>
</protein>
<reference key="1">
    <citation type="journal article" date="2007" name="J. Bacteriol.">
        <title>The genome sequence of avian pathogenic Escherichia coli strain O1:K1:H7 shares strong similarities with human extraintestinal pathogenic E. coli genomes.</title>
        <authorList>
            <person name="Johnson T.J."/>
            <person name="Kariyawasam S."/>
            <person name="Wannemuehler Y."/>
            <person name="Mangiamele P."/>
            <person name="Johnson S.J."/>
            <person name="Doetkott C."/>
            <person name="Skyberg J.A."/>
            <person name="Lynne A.M."/>
            <person name="Johnson J.R."/>
            <person name="Nolan L.K."/>
        </authorList>
    </citation>
    <scope>NUCLEOTIDE SEQUENCE [LARGE SCALE GENOMIC DNA]</scope>
</reference>
<organism>
    <name type="scientific">Escherichia coli O1:K1 / APEC</name>
    <dbReference type="NCBI Taxonomy" id="405955"/>
    <lineage>
        <taxon>Bacteria</taxon>
        <taxon>Pseudomonadati</taxon>
        <taxon>Pseudomonadota</taxon>
        <taxon>Gammaproteobacteria</taxon>
        <taxon>Enterobacterales</taxon>
        <taxon>Enterobacteriaceae</taxon>
        <taxon>Escherichia</taxon>
    </lineage>
</organism>
<dbReference type="EC" id="1.7.2.2" evidence="1"/>
<dbReference type="EMBL" id="CP000468">
    <property type="protein sequence ID" value="ABJ03551.1"/>
    <property type="molecule type" value="Genomic_DNA"/>
</dbReference>
<dbReference type="RefSeq" id="WP_000196879.1">
    <property type="nucleotide sequence ID" value="NZ_CADILS010000008.1"/>
</dbReference>
<dbReference type="SMR" id="A1AIR1"/>
<dbReference type="KEGG" id="ecv:APECO1_2385"/>
<dbReference type="HOGENOM" id="CLU_035040_1_0_6"/>
<dbReference type="UniPathway" id="UPA00653"/>
<dbReference type="Proteomes" id="UP000008216">
    <property type="component" value="Chromosome"/>
</dbReference>
<dbReference type="GO" id="GO:0030288">
    <property type="term" value="C:outer membrane-bounded periplasmic space"/>
    <property type="evidence" value="ECO:0007669"/>
    <property type="project" value="TreeGrafter"/>
</dbReference>
<dbReference type="GO" id="GO:0005509">
    <property type="term" value="F:calcium ion binding"/>
    <property type="evidence" value="ECO:0007669"/>
    <property type="project" value="UniProtKB-UniRule"/>
</dbReference>
<dbReference type="GO" id="GO:0020037">
    <property type="term" value="F:heme binding"/>
    <property type="evidence" value="ECO:0007669"/>
    <property type="project" value="InterPro"/>
</dbReference>
<dbReference type="GO" id="GO:0005506">
    <property type="term" value="F:iron ion binding"/>
    <property type="evidence" value="ECO:0007669"/>
    <property type="project" value="UniProtKB-UniRule"/>
</dbReference>
<dbReference type="GO" id="GO:0042279">
    <property type="term" value="F:nitrite reductase (cytochrome, ammonia-forming) activity"/>
    <property type="evidence" value="ECO:0007669"/>
    <property type="project" value="UniProtKB-UniRule"/>
</dbReference>
<dbReference type="GO" id="GO:0019645">
    <property type="term" value="P:anaerobic electron transport chain"/>
    <property type="evidence" value="ECO:0007669"/>
    <property type="project" value="TreeGrafter"/>
</dbReference>
<dbReference type="GO" id="GO:0042128">
    <property type="term" value="P:nitrate assimilation"/>
    <property type="evidence" value="ECO:0007669"/>
    <property type="project" value="UniProtKB-UniRule"/>
</dbReference>
<dbReference type="CDD" id="cd00548">
    <property type="entry name" value="NrfA-like"/>
    <property type="match status" value="1"/>
</dbReference>
<dbReference type="FunFam" id="1.10.1130.10:FF:000002">
    <property type="entry name" value="Cytochrome c-552"/>
    <property type="match status" value="1"/>
</dbReference>
<dbReference type="FunFam" id="1.20.140.10:FF:000014">
    <property type="entry name" value="Cytochrome c-552"/>
    <property type="match status" value="1"/>
</dbReference>
<dbReference type="Gene3D" id="1.20.140.10">
    <property type="entry name" value="Butyryl-CoA Dehydrogenase, subunit A, domain 3"/>
    <property type="match status" value="1"/>
</dbReference>
<dbReference type="Gene3D" id="1.10.1130.10">
    <property type="entry name" value="Flavocytochrome C3, Chain A"/>
    <property type="match status" value="1"/>
</dbReference>
<dbReference type="HAMAP" id="MF_01182">
    <property type="entry name" value="Cytochrom_C552"/>
    <property type="match status" value="1"/>
</dbReference>
<dbReference type="InterPro" id="IPR003321">
    <property type="entry name" value="Cyt_c552"/>
</dbReference>
<dbReference type="InterPro" id="IPR017570">
    <property type="entry name" value="Cyt_c_NO2Rdtase_formate-dep"/>
</dbReference>
<dbReference type="InterPro" id="IPR036280">
    <property type="entry name" value="Multihaem_cyt_sf"/>
</dbReference>
<dbReference type="NCBIfam" id="TIGR03152">
    <property type="entry name" value="cyto_c552_HCOOH"/>
    <property type="match status" value="1"/>
</dbReference>
<dbReference type="NCBIfam" id="NF008339">
    <property type="entry name" value="PRK11125.1"/>
    <property type="match status" value="1"/>
</dbReference>
<dbReference type="PANTHER" id="PTHR30633:SF0">
    <property type="entry name" value="CYTOCHROME C-552"/>
    <property type="match status" value="1"/>
</dbReference>
<dbReference type="PANTHER" id="PTHR30633">
    <property type="entry name" value="CYTOCHROME C-552 RESPIRATORY NITRITE REDUCTASE"/>
    <property type="match status" value="1"/>
</dbReference>
<dbReference type="Pfam" id="PF02335">
    <property type="entry name" value="Cytochrom_C552"/>
    <property type="match status" value="1"/>
</dbReference>
<dbReference type="PIRSF" id="PIRSF000243">
    <property type="entry name" value="Cyt_c552"/>
    <property type="match status" value="1"/>
</dbReference>
<dbReference type="SUPFAM" id="SSF48695">
    <property type="entry name" value="Multiheme cytochromes"/>
    <property type="match status" value="1"/>
</dbReference>
<dbReference type="PROSITE" id="PS51008">
    <property type="entry name" value="MULTIHEME_CYTC"/>
    <property type="match status" value="1"/>
</dbReference>
<feature type="signal peptide" evidence="1">
    <location>
        <begin position="1"/>
        <end position="26"/>
    </location>
</feature>
<feature type="chain" id="PRO_1000065803" description="Cytochrome c-552">
    <location>
        <begin position="27"/>
        <end position="478"/>
    </location>
</feature>
<feature type="binding site" description="axial binding residue" evidence="1">
    <location>
        <position position="94"/>
    </location>
    <ligand>
        <name>heme c</name>
        <dbReference type="ChEBI" id="CHEBI:61717"/>
        <label>3</label>
    </ligand>
    <ligandPart>
        <name>Fe</name>
        <dbReference type="ChEBI" id="CHEBI:18248"/>
    </ligandPart>
</feature>
<feature type="binding site" description="covalent" evidence="1">
    <location>
        <position position="122"/>
    </location>
    <ligand>
        <name>heme</name>
        <dbReference type="ChEBI" id="CHEBI:30413"/>
        <label>1</label>
    </ligand>
</feature>
<feature type="binding site" description="covalent" evidence="1">
    <location>
        <position position="125"/>
    </location>
    <ligand>
        <name>heme</name>
        <dbReference type="ChEBI" id="CHEBI:30413"/>
        <label>1</label>
    </ligand>
</feature>
<feature type="binding site" description="axial binding residue" evidence="1">
    <location>
        <position position="126"/>
    </location>
    <ligand>
        <name>heme</name>
        <dbReference type="ChEBI" id="CHEBI:30413"/>
        <label>1</label>
    </ligand>
    <ligandPart>
        <name>Fe</name>
        <dbReference type="ChEBI" id="CHEBI:18248"/>
    </ligandPart>
</feature>
<feature type="binding site" description="covalent" evidence="1">
    <location>
        <position position="160"/>
    </location>
    <ligand>
        <name>heme c</name>
        <dbReference type="ChEBI" id="CHEBI:61717"/>
        <label>2</label>
    </ligand>
</feature>
<feature type="binding site" description="covalent" evidence="1">
    <location>
        <position position="163"/>
    </location>
    <ligand>
        <name>heme c</name>
        <dbReference type="ChEBI" id="CHEBI:61717"/>
        <label>2</label>
    </ligand>
</feature>
<feature type="binding site" description="axial binding residue" evidence="1">
    <location>
        <position position="164"/>
    </location>
    <ligand>
        <name>heme c</name>
        <dbReference type="ChEBI" id="CHEBI:61717"/>
        <label>2</label>
    </ligand>
    <ligandPart>
        <name>Fe</name>
        <dbReference type="ChEBI" id="CHEBI:18248"/>
    </ligandPart>
</feature>
<feature type="binding site" description="covalent" evidence="1">
    <location>
        <position position="209"/>
    </location>
    <ligand>
        <name>heme c</name>
        <dbReference type="ChEBI" id="CHEBI:61717"/>
        <label>3</label>
    </ligand>
</feature>
<feature type="binding site" description="covalent" evidence="1">
    <location>
        <position position="212"/>
    </location>
    <ligand>
        <name>heme c</name>
        <dbReference type="ChEBI" id="CHEBI:61717"/>
        <label>3</label>
    </ligand>
</feature>
<feature type="binding site" description="axial binding residue" evidence="1">
    <location>
        <position position="213"/>
    </location>
    <ligand>
        <name>heme c</name>
        <dbReference type="ChEBI" id="CHEBI:61717"/>
        <label>3</label>
    </ligand>
    <ligandPart>
        <name>Fe</name>
        <dbReference type="ChEBI" id="CHEBI:18248"/>
    </ligandPart>
</feature>
<feature type="binding site" evidence="1">
    <location>
        <position position="215"/>
    </location>
    <ligand>
        <name>Ca(2+)</name>
        <dbReference type="ChEBI" id="CHEBI:29108"/>
    </ligand>
</feature>
<feature type="binding site" evidence="1">
    <location>
        <position position="216"/>
    </location>
    <ligand>
        <name>Ca(2+)</name>
        <dbReference type="ChEBI" id="CHEBI:29108"/>
    </ligand>
</feature>
<feature type="binding site" evidence="1">
    <location>
        <position position="216"/>
    </location>
    <ligand>
        <name>substrate</name>
    </ligand>
</feature>
<feature type="binding site" evidence="1">
    <location>
        <position position="261"/>
    </location>
    <ligand>
        <name>Ca(2+)</name>
        <dbReference type="ChEBI" id="CHEBI:29108"/>
    </ligand>
</feature>
<feature type="binding site" evidence="1">
    <location>
        <position position="263"/>
    </location>
    <ligand>
        <name>Ca(2+)</name>
        <dbReference type="ChEBI" id="CHEBI:29108"/>
    </ligand>
</feature>
<feature type="binding site" evidence="1">
    <location>
        <position position="264"/>
    </location>
    <ligand>
        <name>substrate</name>
    </ligand>
</feature>
<feature type="binding site" description="axial binding residue" evidence="1">
    <location>
        <position position="275"/>
    </location>
    <ligand>
        <name>heme c</name>
        <dbReference type="ChEBI" id="CHEBI:61717"/>
        <label>5</label>
    </ligand>
    <ligandPart>
        <name>Fe</name>
        <dbReference type="ChEBI" id="CHEBI:18248"/>
    </ligandPart>
</feature>
<feature type="binding site" description="covalent" evidence="1">
    <location>
        <position position="282"/>
    </location>
    <ligand>
        <name>heme c</name>
        <dbReference type="ChEBI" id="CHEBI:61717"/>
        <label>4</label>
    </ligand>
</feature>
<feature type="binding site" description="covalent" evidence="1">
    <location>
        <position position="285"/>
    </location>
    <ligand>
        <name>heme c</name>
        <dbReference type="ChEBI" id="CHEBI:61717"/>
        <label>4</label>
    </ligand>
</feature>
<feature type="binding site" description="axial binding residue" evidence="1">
    <location>
        <position position="286"/>
    </location>
    <ligand>
        <name>heme c</name>
        <dbReference type="ChEBI" id="CHEBI:61717"/>
        <label>4</label>
    </ligand>
    <ligandPart>
        <name>Fe</name>
        <dbReference type="ChEBI" id="CHEBI:18248"/>
    </ligandPart>
</feature>
<feature type="binding site" description="axial binding residue" evidence="1">
    <location>
        <position position="301"/>
    </location>
    <ligand>
        <name>heme c</name>
        <dbReference type="ChEBI" id="CHEBI:61717"/>
        <label>2</label>
    </ligand>
    <ligandPart>
        <name>Fe</name>
        <dbReference type="ChEBI" id="CHEBI:18248"/>
    </ligandPart>
</feature>
<feature type="binding site" description="covalent" evidence="1">
    <location>
        <position position="314"/>
    </location>
    <ligand>
        <name>heme c</name>
        <dbReference type="ChEBI" id="CHEBI:61717"/>
        <label>5</label>
    </ligand>
</feature>
<feature type="binding site" description="covalent" evidence="1">
    <location>
        <position position="317"/>
    </location>
    <ligand>
        <name>heme c</name>
        <dbReference type="ChEBI" id="CHEBI:61717"/>
        <label>5</label>
    </ligand>
</feature>
<feature type="binding site" description="axial binding residue" evidence="1">
    <location>
        <position position="318"/>
    </location>
    <ligand>
        <name>heme c</name>
        <dbReference type="ChEBI" id="CHEBI:61717"/>
        <label>5</label>
    </ligand>
    <ligandPart>
        <name>Fe</name>
        <dbReference type="ChEBI" id="CHEBI:18248"/>
    </ligandPart>
</feature>
<feature type="binding site" description="axial binding residue" evidence="1">
    <location>
        <position position="393"/>
    </location>
    <ligand>
        <name>heme c</name>
        <dbReference type="ChEBI" id="CHEBI:61717"/>
        <label>4</label>
    </ligand>
    <ligandPart>
        <name>Fe</name>
        <dbReference type="ChEBI" id="CHEBI:18248"/>
    </ligandPart>
</feature>
<gene>
    <name evidence="1" type="primary">nrfA</name>
    <name type="ordered locus">Ecok1_40570</name>
    <name type="ORF">APECO1_2385</name>
</gene>
<comment type="function">
    <text evidence="1">Catalyzes the reduction of nitrite to ammonia, consuming six electrons in the process.</text>
</comment>
<comment type="catalytic activity">
    <reaction evidence="1">
        <text>6 Fe(III)-[cytochrome c] + NH4(+) + 2 H2O = 6 Fe(II)-[cytochrome c] + nitrite + 8 H(+)</text>
        <dbReference type="Rhea" id="RHEA:13089"/>
        <dbReference type="Rhea" id="RHEA-COMP:10350"/>
        <dbReference type="Rhea" id="RHEA-COMP:14399"/>
        <dbReference type="ChEBI" id="CHEBI:15377"/>
        <dbReference type="ChEBI" id="CHEBI:15378"/>
        <dbReference type="ChEBI" id="CHEBI:16301"/>
        <dbReference type="ChEBI" id="CHEBI:28938"/>
        <dbReference type="ChEBI" id="CHEBI:29033"/>
        <dbReference type="ChEBI" id="CHEBI:29034"/>
        <dbReference type="EC" id="1.7.2.2"/>
    </reaction>
</comment>
<comment type="cofactor">
    <cofactor evidence="1">
        <name>Ca(2+)</name>
        <dbReference type="ChEBI" id="CHEBI:29108"/>
    </cofactor>
    <text evidence="1">Binds 1 Ca(2+) ion per monomer.</text>
</comment>
<comment type="cofactor">
    <cofactor evidence="1">
        <name>heme c</name>
        <dbReference type="ChEBI" id="CHEBI:61717"/>
    </cofactor>
    <text evidence="1">Binds 5 heme c groups covalently per monomer.</text>
</comment>
<comment type="pathway">
    <text evidence="1">Nitrogen metabolism; nitrate reduction (assimilation).</text>
</comment>
<comment type="subcellular location">
    <subcellularLocation>
        <location evidence="1">Periplasm</location>
    </subcellularLocation>
</comment>
<comment type="similarity">
    <text evidence="1">Belongs to the cytochrome c-552 family.</text>
</comment>
<sequence>MTRIKINARRIFSLLIPFFFFTSVHAEQTAAPATPVTVEAKNETFAPQHPDQYLSWKATSEQSERVDALAEDPRLVILWAGYPFSRDYNKPRGHAFAVTDVRETLRTGAPKNAEDGPLPMACWSCKSPDVARLIQKDGEDGYFHGKWARGGPEIVNNLGCADCHNTASPEFAKGKPELTLSRPYAARAMEAIGKPFEKAGRFDQQSMVCGQCHVEYYFDGKNKAVKFPWDDGMKVENMEQYYDKIAFSDWTNSLSKTPMLKAQHPEYETWTAGIHGKNNVTCIDCHMPKVQNAEGKLYTDHKIGNPFDNFAQTCANCHTQDKAALQKVVAERKQSINDLKIKVEDQLVHAHFEAKAALDAGATEAEMKPIQDDIRHAQWRWDLAIASHGIHMHAPEEGLRMLGTAMDKAADARTKLARLLATKGITHEIQIPDISTKEKAQQAIGLNMEQIKAEKQDFIKTVIPQWEEQARKNGLLSQ</sequence>
<accession>A1AIR1</accession>
<keyword id="KW-0106">Calcium</keyword>
<keyword id="KW-0249">Electron transport</keyword>
<keyword id="KW-0349">Heme</keyword>
<keyword id="KW-0408">Iron</keyword>
<keyword id="KW-0479">Metal-binding</keyword>
<keyword id="KW-0560">Oxidoreductase</keyword>
<keyword id="KW-0574">Periplasm</keyword>
<keyword id="KW-1185">Reference proteome</keyword>
<keyword id="KW-0732">Signal</keyword>
<keyword id="KW-0813">Transport</keyword>
<proteinExistence type="inferred from homology"/>
<name>NRFA_ECOK1</name>